<protein>
    <recommendedName>
        <fullName evidence="1">N-succinylglutamate 5-semialdehyde dehydrogenase</fullName>
        <ecNumber evidence="1">1.2.1.71</ecNumber>
    </recommendedName>
    <alternativeName>
        <fullName evidence="1">Succinylglutamic semialdehyde dehydrogenase</fullName>
        <shortName evidence="1">SGSD</shortName>
    </alternativeName>
</protein>
<comment type="function">
    <text evidence="1">Catalyzes the NAD-dependent reduction of succinylglutamate semialdehyde into succinylglutamate.</text>
</comment>
<comment type="catalytic activity">
    <reaction evidence="1">
        <text>N-succinyl-L-glutamate 5-semialdehyde + NAD(+) + H2O = N-succinyl-L-glutamate + NADH + 2 H(+)</text>
        <dbReference type="Rhea" id="RHEA:10812"/>
        <dbReference type="ChEBI" id="CHEBI:15377"/>
        <dbReference type="ChEBI" id="CHEBI:15378"/>
        <dbReference type="ChEBI" id="CHEBI:57540"/>
        <dbReference type="ChEBI" id="CHEBI:57945"/>
        <dbReference type="ChEBI" id="CHEBI:58520"/>
        <dbReference type="ChEBI" id="CHEBI:58763"/>
        <dbReference type="EC" id="1.2.1.71"/>
    </reaction>
</comment>
<comment type="pathway">
    <text evidence="1">Amino-acid degradation; L-arginine degradation via AST pathway; L-glutamate and succinate from L-arginine: step 4/5.</text>
</comment>
<comment type="similarity">
    <text evidence="1">Belongs to the aldehyde dehydrogenase family. AstD subfamily.</text>
</comment>
<proteinExistence type="inferred from homology"/>
<keyword id="KW-0056">Arginine metabolism</keyword>
<keyword id="KW-0520">NAD</keyword>
<keyword id="KW-0560">Oxidoreductase</keyword>
<keyword id="KW-1185">Reference proteome</keyword>
<dbReference type="EC" id="1.2.1.71" evidence="1"/>
<dbReference type="EMBL" id="AM746676">
    <property type="protein sequence ID" value="CAN90833.1"/>
    <property type="molecule type" value="Genomic_DNA"/>
</dbReference>
<dbReference type="RefSeq" id="WP_012233311.1">
    <property type="nucleotide sequence ID" value="NC_010162.1"/>
</dbReference>
<dbReference type="SMR" id="A9EN94"/>
<dbReference type="STRING" id="448385.sce0676"/>
<dbReference type="KEGG" id="scl:sce0676"/>
<dbReference type="eggNOG" id="COG1012">
    <property type="taxonomic scope" value="Bacteria"/>
</dbReference>
<dbReference type="HOGENOM" id="CLU_005391_1_0_7"/>
<dbReference type="OrthoDB" id="6187633at2"/>
<dbReference type="BioCyc" id="SCEL448385:SCE_RS03540-MONOMER"/>
<dbReference type="UniPathway" id="UPA00185">
    <property type="reaction ID" value="UER00282"/>
</dbReference>
<dbReference type="Proteomes" id="UP000002139">
    <property type="component" value="Chromosome"/>
</dbReference>
<dbReference type="GO" id="GO:0043824">
    <property type="term" value="F:succinylglutamate-semialdehyde dehydrogenase activity"/>
    <property type="evidence" value="ECO:0007669"/>
    <property type="project" value="UniProtKB-EC"/>
</dbReference>
<dbReference type="GO" id="GO:0019545">
    <property type="term" value="P:arginine catabolic process to succinate"/>
    <property type="evidence" value="ECO:0007669"/>
    <property type="project" value="UniProtKB-UniPathway"/>
</dbReference>
<dbReference type="CDD" id="cd07095">
    <property type="entry name" value="ALDH_SGSD_AstD"/>
    <property type="match status" value="1"/>
</dbReference>
<dbReference type="FunFam" id="3.40.605.10:FF:000010">
    <property type="entry name" value="N-succinylglutamate 5-semialdehyde dehydrogenase"/>
    <property type="match status" value="1"/>
</dbReference>
<dbReference type="Gene3D" id="3.40.605.10">
    <property type="entry name" value="Aldehyde Dehydrogenase, Chain A, domain 1"/>
    <property type="match status" value="1"/>
</dbReference>
<dbReference type="Gene3D" id="3.40.309.10">
    <property type="entry name" value="Aldehyde Dehydrogenase, Chain A, domain 2"/>
    <property type="match status" value="1"/>
</dbReference>
<dbReference type="HAMAP" id="MF_01174">
    <property type="entry name" value="Aldedh_AstD"/>
    <property type="match status" value="1"/>
</dbReference>
<dbReference type="InterPro" id="IPR016161">
    <property type="entry name" value="Ald_DH/histidinol_DH"/>
</dbReference>
<dbReference type="InterPro" id="IPR016163">
    <property type="entry name" value="Ald_DH_C"/>
</dbReference>
<dbReference type="InterPro" id="IPR016160">
    <property type="entry name" value="Ald_DH_CS_CYS"/>
</dbReference>
<dbReference type="InterPro" id="IPR029510">
    <property type="entry name" value="Ald_DH_CS_GLU"/>
</dbReference>
<dbReference type="InterPro" id="IPR016162">
    <property type="entry name" value="Ald_DH_N"/>
</dbReference>
<dbReference type="InterPro" id="IPR015590">
    <property type="entry name" value="Aldehyde_DH_dom"/>
</dbReference>
<dbReference type="InterPro" id="IPR017649">
    <property type="entry name" value="SuccinylGlu_semiald_DH_AstD"/>
</dbReference>
<dbReference type="NCBIfam" id="TIGR03240">
    <property type="entry name" value="arg_catab_astD"/>
    <property type="match status" value="1"/>
</dbReference>
<dbReference type="NCBIfam" id="NF006992">
    <property type="entry name" value="PRK09457.1"/>
    <property type="match status" value="1"/>
</dbReference>
<dbReference type="PANTHER" id="PTHR11699">
    <property type="entry name" value="ALDEHYDE DEHYDROGENASE-RELATED"/>
    <property type="match status" value="1"/>
</dbReference>
<dbReference type="Pfam" id="PF00171">
    <property type="entry name" value="Aldedh"/>
    <property type="match status" value="1"/>
</dbReference>
<dbReference type="SUPFAM" id="SSF53720">
    <property type="entry name" value="ALDH-like"/>
    <property type="match status" value="1"/>
</dbReference>
<dbReference type="PROSITE" id="PS00070">
    <property type="entry name" value="ALDEHYDE_DEHYDR_CYS"/>
    <property type="match status" value="1"/>
</dbReference>
<dbReference type="PROSITE" id="PS00687">
    <property type="entry name" value="ALDEHYDE_DEHYDR_GLU"/>
    <property type="match status" value="1"/>
</dbReference>
<gene>
    <name evidence="1" type="primary">astD</name>
    <name type="ordered locus">sce0676</name>
</gene>
<reference key="1">
    <citation type="journal article" date="2007" name="Nat. Biotechnol.">
        <title>Complete genome sequence of the myxobacterium Sorangium cellulosum.</title>
        <authorList>
            <person name="Schneiker S."/>
            <person name="Perlova O."/>
            <person name="Kaiser O."/>
            <person name="Gerth K."/>
            <person name="Alici A."/>
            <person name="Altmeyer M.O."/>
            <person name="Bartels D."/>
            <person name="Bekel T."/>
            <person name="Beyer S."/>
            <person name="Bode E."/>
            <person name="Bode H.B."/>
            <person name="Bolten C.J."/>
            <person name="Choudhuri J.V."/>
            <person name="Doss S."/>
            <person name="Elnakady Y.A."/>
            <person name="Frank B."/>
            <person name="Gaigalat L."/>
            <person name="Goesmann A."/>
            <person name="Groeger C."/>
            <person name="Gross F."/>
            <person name="Jelsbak L."/>
            <person name="Jelsbak L."/>
            <person name="Kalinowski J."/>
            <person name="Kegler C."/>
            <person name="Knauber T."/>
            <person name="Konietzny S."/>
            <person name="Kopp M."/>
            <person name="Krause L."/>
            <person name="Krug D."/>
            <person name="Linke B."/>
            <person name="Mahmud T."/>
            <person name="Martinez-Arias R."/>
            <person name="McHardy A.C."/>
            <person name="Merai M."/>
            <person name="Meyer F."/>
            <person name="Mormann S."/>
            <person name="Munoz-Dorado J."/>
            <person name="Perez J."/>
            <person name="Pradella S."/>
            <person name="Rachid S."/>
            <person name="Raddatz G."/>
            <person name="Rosenau F."/>
            <person name="Rueckert C."/>
            <person name="Sasse F."/>
            <person name="Scharfe M."/>
            <person name="Schuster S.C."/>
            <person name="Suen G."/>
            <person name="Treuner-Lange A."/>
            <person name="Velicer G.J."/>
            <person name="Vorholter F.-J."/>
            <person name="Weissman K.J."/>
            <person name="Welch R.D."/>
            <person name="Wenzel S.C."/>
            <person name="Whitworth D.E."/>
            <person name="Wilhelm S."/>
            <person name="Wittmann C."/>
            <person name="Bloecker H."/>
            <person name="Puehler A."/>
            <person name="Mueller R."/>
        </authorList>
    </citation>
    <scope>NUCLEOTIDE SEQUENCE [LARGE SCALE GENOMIC DNA]</scope>
    <source>
        <strain>So ce56</strain>
    </source>
</reference>
<accession>A9EN94</accession>
<organism>
    <name type="scientific">Sorangium cellulosum (strain So ce56)</name>
    <name type="common">Polyangium cellulosum (strain So ce56)</name>
    <dbReference type="NCBI Taxonomy" id="448385"/>
    <lineage>
        <taxon>Bacteria</taxon>
        <taxon>Pseudomonadati</taxon>
        <taxon>Myxococcota</taxon>
        <taxon>Polyangia</taxon>
        <taxon>Polyangiales</taxon>
        <taxon>Polyangiaceae</taxon>
        <taxon>Sorangium</taxon>
    </lineage>
</organism>
<name>ASTD_SORC5</name>
<feature type="chain" id="PRO_1000085410" description="N-succinylglutamate 5-semialdehyde dehydrogenase">
    <location>
        <begin position="1"/>
        <end position="489"/>
    </location>
</feature>
<feature type="active site" evidence="1">
    <location>
        <position position="244"/>
    </location>
</feature>
<feature type="active site" evidence="1">
    <location>
        <position position="278"/>
    </location>
</feature>
<feature type="binding site" evidence="1">
    <location>
        <begin position="221"/>
        <end position="226"/>
    </location>
    <ligand>
        <name>NAD(+)</name>
        <dbReference type="ChEBI" id="CHEBI:57540"/>
    </ligand>
</feature>
<evidence type="ECO:0000255" key="1">
    <source>
        <dbReference type="HAMAP-Rule" id="MF_01174"/>
    </source>
</evidence>
<sequence length="489" mass="51883">MSTHFIDGSWVTGAGEPFASRNPVTQAVVFEGRAASEEQVDAAVAAARGAFAAWRDRGLEERAALVKRFAGVLGEHKARLADVIGLETGKPRWEALTEVQTMIGKIDVSLMAWRERTGERQAEAGDATAVVRHRPHGVVAVLGPYNFPGHLPNGHIVPALIAGNCVVFKPSELTPRVAEETARLWEKAGIPAGVLNLVQGGRRTGVALAGHPGIDGLFFTGSSGTGNALHRQLAGQPEKILALEMGGNNPLIVQDVANTEAAIHHILQSSFISAGQRCTCARRLLVPATPEGDALLGRLVDAASRLKVGRYDDAEQPFMGAVISLAAADRLLAAQARLVSLGGEVLLEMRRLEEGTALLSPGILDVSAIKELPDEEHFGPLVQVQRYGSFDEALSLANRTRYGLAAGLISDRRELYERFWRESRAGIVNWNKPLTGASSAAPFGGVGSSGNHRPSAYYAADYCAYPVAGLEAAAVALPGQLAPGMRLNS</sequence>